<comment type="function">
    <text evidence="1">Involved in cell division and chromosome segregation.</text>
</comment>
<comment type="similarity">
    <text evidence="1">Belongs to the WhiA family.</text>
</comment>
<feature type="chain" id="PRO_0000376568" description="Probable cell division protein WhiA">
    <location>
        <begin position="1"/>
        <end position="314"/>
    </location>
</feature>
<feature type="DNA-binding region" description="H-T-H motif" evidence="1">
    <location>
        <begin position="274"/>
        <end position="308"/>
    </location>
</feature>
<sequence length="314" mass="35714">MSFASDMKNELTRIDVDESNAKAELSALIRMNGALSLSNQQFVINIQTENATTARRIYSLIKRIFNVEVEILVRKKMKLKKNNIYICRTKVRAKEILDELGILKNGIFVHDIDASMIKDDEMRRSYLRGAFLAGGSVNNPETSSYHLEIFSQYENHSEGLTKLMNSYGLNAKHLERKKGSIAYLKEAEKISDFLSLIGGYQALLKFEDVRIVRDMRNSVNRLVNCETANLNKTVSAAMKQVESIQLIEQEIGLDNLPDRLREIAKLRVEHQEISLKELGEMISTGPISKSGVNHRLRKLNELADKIRSGEKIEL</sequence>
<evidence type="ECO:0000255" key="1">
    <source>
        <dbReference type="HAMAP-Rule" id="MF_01420"/>
    </source>
</evidence>
<name>WHIA_STAHJ</name>
<proteinExistence type="inferred from homology"/>
<protein>
    <recommendedName>
        <fullName evidence="1">Probable cell division protein WhiA</fullName>
    </recommendedName>
</protein>
<accession>Q4L4J4</accession>
<keyword id="KW-0131">Cell cycle</keyword>
<keyword id="KW-0132">Cell division</keyword>
<keyword id="KW-0238">DNA-binding</keyword>
<gene>
    <name evidence="1" type="primary">whiA</name>
    <name type="ordered locus">SH2122</name>
</gene>
<organism>
    <name type="scientific">Staphylococcus haemolyticus (strain JCSC1435)</name>
    <dbReference type="NCBI Taxonomy" id="279808"/>
    <lineage>
        <taxon>Bacteria</taxon>
        <taxon>Bacillati</taxon>
        <taxon>Bacillota</taxon>
        <taxon>Bacilli</taxon>
        <taxon>Bacillales</taxon>
        <taxon>Staphylococcaceae</taxon>
        <taxon>Staphylococcus</taxon>
    </lineage>
</organism>
<reference key="1">
    <citation type="journal article" date="2005" name="J. Bacteriol.">
        <title>Whole-genome sequencing of Staphylococcus haemolyticus uncovers the extreme plasticity of its genome and the evolution of human-colonizing staphylococcal species.</title>
        <authorList>
            <person name="Takeuchi F."/>
            <person name="Watanabe S."/>
            <person name="Baba T."/>
            <person name="Yuzawa H."/>
            <person name="Ito T."/>
            <person name="Morimoto Y."/>
            <person name="Kuroda M."/>
            <person name="Cui L."/>
            <person name="Takahashi M."/>
            <person name="Ankai A."/>
            <person name="Baba S."/>
            <person name="Fukui S."/>
            <person name="Lee J.C."/>
            <person name="Hiramatsu K."/>
        </authorList>
    </citation>
    <scope>NUCLEOTIDE SEQUENCE [LARGE SCALE GENOMIC DNA]</scope>
    <source>
        <strain>JCSC1435</strain>
    </source>
</reference>
<dbReference type="EMBL" id="AP006716">
    <property type="protein sequence ID" value="BAE05431.1"/>
    <property type="molecule type" value="Genomic_DNA"/>
</dbReference>
<dbReference type="RefSeq" id="WP_011276386.1">
    <property type="nucleotide sequence ID" value="NC_007168.1"/>
</dbReference>
<dbReference type="SMR" id="Q4L4J4"/>
<dbReference type="KEGG" id="sha:SH2122"/>
<dbReference type="eggNOG" id="COG1481">
    <property type="taxonomic scope" value="Bacteria"/>
</dbReference>
<dbReference type="HOGENOM" id="CLU_053282_0_0_9"/>
<dbReference type="OrthoDB" id="401278at2"/>
<dbReference type="Proteomes" id="UP000000543">
    <property type="component" value="Chromosome"/>
</dbReference>
<dbReference type="GO" id="GO:0003677">
    <property type="term" value="F:DNA binding"/>
    <property type="evidence" value="ECO:0007669"/>
    <property type="project" value="UniProtKB-UniRule"/>
</dbReference>
<dbReference type="GO" id="GO:0051301">
    <property type="term" value="P:cell division"/>
    <property type="evidence" value="ECO:0007669"/>
    <property type="project" value="UniProtKB-UniRule"/>
</dbReference>
<dbReference type="GO" id="GO:0043937">
    <property type="term" value="P:regulation of sporulation"/>
    <property type="evidence" value="ECO:0007669"/>
    <property type="project" value="InterPro"/>
</dbReference>
<dbReference type="FunFam" id="3.10.28.10:FF:000002">
    <property type="entry name" value="Probable cell division protein WhiA"/>
    <property type="match status" value="1"/>
</dbReference>
<dbReference type="Gene3D" id="3.10.28.10">
    <property type="entry name" value="Homing endonucleases"/>
    <property type="match status" value="1"/>
</dbReference>
<dbReference type="HAMAP" id="MF_01420">
    <property type="entry name" value="HTH_type_WhiA"/>
    <property type="match status" value="1"/>
</dbReference>
<dbReference type="InterPro" id="IPR027434">
    <property type="entry name" value="Homing_endonucl"/>
</dbReference>
<dbReference type="InterPro" id="IPR018478">
    <property type="entry name" value="Sporu_reg_WhiA_N_dom"/>
</dbReference>
<dbReference type="InterPro" id="IPR003802">
    <property type="entry name" value="Sporulation_regulator_WhiA"/>
</dbReference>
<dbReference type="InterPro" id="IPR023054">
    <property type="entry name" value="Sporulation_regulator_WhiA_C"/>
</dbReference>
<dbReference type="InterPro" id="IPR039518">
    <property type="entry name" value="WhiA_LAGLIDADG_dom"/>
</dbReference>
<dbReference type="NCBIfam" id="TIGR00647">
    <property type="entry name" value="DNA_bind_WhiA"/>
    <property type="match status" value="1"/>
</dbReference>
<dbReference type="PANTHER" id="PTHR37307">
    <property type="entry name" value="CELL DIVISION PROTEIN WHIA-RELATED"/>
    <property type="match status" value="1"/>
</dbReference>
<dbReference type="PANTHER" id="PTHR37307:SF1">
    <property type="entry name" value="CELL DIVISION PROTEIN WHIA-RELATED"/>
    <property type="match status" value="1"/>
</dbReference>
<dbReference type="Pfam" id="PF02650">
    <property type="entry name" value="HTH_WhiA"/>
    <property type="match status" value="1"/>
</dbReference>
<dbReference type="Pfam" id="PF14527">
    <property type="entry name" value="LAGLIDADG_WhiA"/>
    <property type="match status" value="1"/>
</dbReference>
<dbReference type="Pfam" id="PF10298">
    <property type="entry name" value="WhiA_N"/>
    <property type="match status" value="1"/>
</dbReference>
<dbReference type="SUPFAM" id="SSF55608">
    <property type="entry name" value="Homing endonucleases"/>
    <property type="match status" value="1"/>
</dbReference>